<reference key="1">
    <citation type="submission" date="2007-05" db="EMBL/GenBank/DDBJ databases">
        <title>Complete sequence of chromosome of Staphylococcus aureus subsp. aureus JH9.</title>
        <authorList>
            <consortium name="US DOE Joint Genome Institute"/>
            <person name="Copeland A."/>
            <person name="Lucas S."/>
            <person name="Lapidus A."/>
            <person name="Barry K."/>
            <person name="Detter J.C."/>
            <person name="Glavina del Rio T."/>
            <person name="Hammon N."/>
            <person name="Israni S."/>
            <person name="Pitluck S."/>
            <person name="Chain P."/>
            <person name="Malfatti S."/>
            <person name="Shin M."/>
            <person name="Vergez L."/>
            <person name="Schmutz J."/>
            <person name="Larimer F."/>
            <person name="Land M."/>
            <person name="Hauser L."/>
            <person name="Kyrpides N."/>
            <person name="Kim E."/>
            <person name="Tomasz A."/>
            <person name="Richardson P."/>
        </authorList>
    </citation>
    <scope>NUCLEOTIDE SEQUENCE [LARGE SCALE GENOMIC DNA]</scope>
    <source>
        <strain>JH9</strain>
    </source>
</reference>
<accession>A5IV50</accession>
<name>MOAA_STAA9</name>
<evidence type="ECO:0000255" key="1">
    <source>
        <dbReference type="HAMAP-Rule" id="MF_01225"/>
    </source>
</evidence>
<evidence type="ECO:0000255" key="2">
    <source>
        <dbReference type="PROSITE-ProRule" id="PRU01266"/>
    </source>
</evidence>
<comment type="function">
    <text evidence="1">Catalyzes the cyclization of GTP to (8S)-3',8-cyclo-7,8-dihydroguanosine 5'-triphosphate.</text>
</comment>
<comment type="catalytic activity">
    <reaction evidence="1">
        <text>GTP + AH2 + S-adenosyl-L-methionine = (8S)-3',8-cyclo-7,8-dihydroguanosine 5'-triphosphate + 5'-deoxyadenosine + L-methionine + A + H(+)</text>
        <dbReference type="Rhea" id="RHEA:49576"/>
        <dbReference type="ChEBI" id="CHEBI:13193"/>
        <dbReference type="ChEBI" id="CHEBI:15378"/>
        <dbReference type="ChEBI" id="CHEBI:17319"/>
        <dbReference type="ChEBI" id="CHEBI:17499"/>
        <dbReference type="ChEBI" id="CHEBI:37565"/>
        <dbReference type="ChEBI" id="CHEBI:57844"/>
        <dbReference type="ChEBI" id="CHEBI:59789"/>
        <dbReference type="ChEBI" id="CHEBI:131766"/>
        <dbReference type="EC" id="4.1.99.22"/>
    </reaction>
</comment>
<comment type="cofactor">
    <cofactor evidence="1">
        <name>[4Fe-4S] cluster</name>
        <dbReference type="ChEBI" id="CHEBI:49883"/>
    </cofactor>
    <text evidence="1">Binds 2 [4Fe-4S] clusters. Binds 1 [4Fe-4S] cluster coordinated with 3 cysteines and an exchangeable S-adenosyl-L-methionine and 1 [4Fe-4S] cluster coordinated with 3 cysteines and the GTP-derived substrate.</text>
</comment>
<comment type="pathway">
    <text evidence="1">Cofactor biosynthesis; molybdopterin biosynthesis.</text>
</comment>
<comment type="subunit">
    <text evidence="1">Monomer and homodimer.</text>
</comment>
<comment type="similarity">
    <text evidence="1">Belongs to the radical SAM superfamily. MoaA family.</text>
</comment>
<proteinExistence type="inferred from homology"/>
<protein>
    <recommendedName>
        <fullName evidence="1">GTP 3',8-cyclase</fullName>
        <ecNumber evidence="1">4.1.99.22</ecNumber>
    </recommendedName>
    <alternativeName>
        <fullName evidence="1">Molybdenum cofactor biosynthesis protein A</fullName>
    </alternativeName>
</protein>
<gene>
    <name evidence="1" type="primary">moaA</name>
    <name type="ordered locus">SaurJH9_2293</name>
</gene>
<feature type="chain" id="PRO_1000085710" description="GTP 3',8-cyclase">
    <location>
        <begin position="1"/>
        <end position="340"/>
    </location>
</feature>
<feature type="domain" description="Radical SAM core" evidence="2">
    <location>
        <begin position="8"/>
        <end position="227"/>
    </location>
</feature>
<feature type="binding site" evidence="1">
    <location>
        <position position="17"/>
    </location>
    <ligand>
        <name>GTP</name>
        <dbReference type="ChEBI" id="CHEBI:37565"/>
    </ligand>
</feature>
<feature type="binding site" evidence="1">
    <location>
        <position position="24"/>
    </location>
    <ligand>
        <name>[4Fe-4S] cluster</name>
        <dbReference type="ChEBI" id="CHEBI:49883"/>
        <label>1</label>
        <note>4Fe-4S-S-AdoMet</note>
    </ligand>
</feature>
<feature type="binding site" evidence="1">
    <location>
        <position position="28"/>
    </location>
    <ligand>
        <name>[4Fe-4S] cluster</name>
        <dbReference type="ChEBI" id="CHEBI:49883"/>
        <label>1</label>
        <note>4Fe-4S-S-AdoMet</note>
    </ligand>
</feature>
<feature type="binding site" evidence="1">
    <location>
        <position position="30"/>
    </location>
    <ligand>
        <name>S-adenosyl-L-methionine</name>
        <dbReference type="ChEBI" id="CHEBI:59789"/>
    </ligand>
</feature>
<feature type="binding site" evidence="1">
    <location>
        <position position="31"/>
    </location>
    <ligand>
        <name>[4Fe-4S] cluster</name>
        <dbReference type="ChEBI" id="CHEBI:49883"/>
        <label>1</label>
        <note>4Fe-4S-S-AdoMet</note>
    </ligand>
</feature>
<feature type="binding site" evidence="1">
    <location>
        <position position="71"/>
    </location>
    <ligand>
        <name>GTP</name>
        <dbReference type="ChEBI" id="CHEBI:37565"/>
    </ligand>
</feature>
<feature type="binding site" evidence="1">
    <location>
        <position position="75"/>
    </location>
    <ligand>
        <name>S-adenosyl-L-methionine</name>
        <dbReference type="ChEBI" id="CHEBI:59789"/>
    </ligand>
</feature>
<feature type="binding site" evidence="1">
    <location>
        <position position="102"/>
    </location>
    <ligand>
        <name>GTP</name>
        <dbReference type="ChEBI" id="CHEBI:37565"/>
    </ligand>
</feature>
<feature type="binding site" evidence="1">
    <location>
        <position position="126"/>
    </location>
    <ligand>
        <name>S-adenosyl-L-methionine</name>
        <dbReference type="ChEBI" id="CHEBI:59789"/>
    </ligand>
</feature>
<feature type="binding site" evidence="1">
    <location>
        <position position="163"/>
    </location>
    <ligand>
        <name>GTP</name>
        <dbReference type="ChEBI" id="CHEBI:37565"/>
    </ligand>
</feature>
<feature type="binding site" evidence="1">
    <location>
        <position position="197"/>
    </location>
    <ligand>
        <name>S-adenosyl-L-methionine</name>
        <dbReference type="ChEBI" id="CHEBI:59789"/>
    </ligand>
</feature>
<feature type="binding site" evidence="1">
    <location>
        <position position="261"/>
    </location>
    <ligand>
        <name>[4Fe-4S] cluster</name>
        <dbReference type="ChEBI" id="CHEBI:49883"/>
        <label>2</label>
        <note>4Fe-4S-substrate</note>
    </ligand>
</feature>
<feature type="binding site" evidence="1">
    <location>
        <position position="264"/>
    </location>
    <ligand>
        <name>[4Fe-4S] cluster</name>
        <dbReference type="ChEBI" id="CHEBI:49883"/>
        <label>2</label>
        <note>4Fe-4S-substrate</note>
    </ligand>
</feature>
<feature type="binding site" evidence="1">
    <location>
        <begin position="266"/>
        <end position="268"/>
    </location>
    <ligand>
        <name>GTP</name>
        <dbReference type="ChEBI" id="CHEBI:37565"/>
    </ligand>
</feature>
<feature type="binding site" evidence="1">
    <location>
        <position position="278"/>
    </location>
    <ligand>
        <name>[4Fe-4S] cluster</name>
        <dbReference type="ChEBI" id="CHEBI:49883"/>
        <label>2</label>
        <note>4Fe-4S-substrate</note>
    </ligand>
</feature>
<keyword id="KW-0004">4Fe-4S</keyword>
<keyword id="KW-0342">GTP-binding</keyword>
<keyword id="KW-0408">Iron</keyword>
<keyword id="KW-0411">Iron-sulfur</keyword>
<keyword id="KW-0456">Lyase</keyword>
<keyword id="KW-0479">Metal-binding</keyword>
<keyword id="KW-0501">Molybdenum cofactor biosynthesis</keyword>
<keyword id="KW-0547">Nucleotide-binding</keyword>
<keyword id="KW-0949">S-adenosyl-L-methionine</keyword>
<dbReference type="EC" id="4.1.99.22" evidence="1"/>
<dbReference type="EMBL" id="CP000703">
    <property type="protein sequence ID" value="ABQ50073.1"/>
    <property type="molecule type" value="Genomic_DNA"/>
</dbReference>
<dbReference type="RefSeq" id="WP_000230173.1">
    <property type="nucleotide sequence ID" value="NC_009487.1"/>
</dbReference>
<dbReference type="SMR" id="A5IV50"/>
<dbReference type="KEGG" id="saj:SaurJH9_2293"/>
<dbReference type="HOGENOM" id="CLU_009273_0_1_9"/>
<dbReference type="UniPathway" id="UPA00344"/>
<dbReference type="GO" id="GO:0051539">
    <property type="term" value="F:4 iron, 4 sulfur cluster binding"/>
    <property type="evidence" value="ECO:0007669"/>
    <property type="project" value="UniProtKB-UniRule"/>
</dbReference>
<dbReference type="GO" id="GO:0061799">
    <property type="term" value="F:cyclic pyranopterin monophosphate synthase activity"/>
    <property type="evidence" value="ECO:0007669"/>
    <property type="project" value="TreeGrafter"/>
</dbReference>
<dbReference type="GO" id="GO:0061798">
    <property type="term" value="F:GTP 3',8'-cyclase activity"/>
    <property type="evidence" value="ECO:0007669"/>
    <property type="project" value="UniProtKB-UniRule"/>
</dbReference>
<dbReference type="GO" id="GO:0005525">
    <property type="term" value="F:GTP binding"/>
    <property type="evidence" value="ECO:0007669"/>
    <property type="project" value="UniProtKB-UniRule"/>
</dbReference>
<dbReference type="GO" id="GO:0046872">
    <property type="term" value="F:metal ion binding"/>
    <property type="evidence" value="ECO:0007669"/>
    <property type="project" value="UniProtKB-KW"/>
</dbReference>
<dbReference type="GO" id="GO:1904047">
    <property type="term" value="F:S-adenosyl-L-methionine binding"/>
    <property type="evidence" value="ECO:0007669"/>
    <property type="project" value="UniProtKB-UniRule"/>
</dbReference>
<dbReference type="GO" id="GO:0006777">
    <property type="term" value="P:Mo-molybdopterin cofactor biosynthetic process"/>
    <property type="evidence" value="ECO:0007669"/>
    <property type="project" value="UniProtKB-UniRule"/>
</dbReference>
<dbReference type="CDD" id="cd01335">
    <property type="entry name" value="Radical_SAM"/>
    <property type="match status" value="1"/>
</dbReference>
<dbReference type="CDD" id="cd21117">
    <property type="entry name" value="Twitch_MoaA"/>
    <property type="match status" value="1"/>
</dbReference>
<dbReference type="Gene3D" id="3.20.20.70">
    <property type="entry name" value="Aldolase class I"/>
    <property type="match status" value="1"/>
</dbReference>
<dbReference type="HAMAP" id="MF_01225_B">
    <property type="entry name" value="MoaA_B"/>
    <property type="match status" value="1"/>
</dbReference>
<dbReference type="InterPro" id="IPR013785">
    <property type="entry name" value="Aldolase_TIM"/>
</dbReference>
<dbReference type="InterPro" id="IPR006638">
    <property type="entry name" value="Elp3/MiaA/NifB-like_rSAM"/>
</dbReference>
<dbReference type="InterPro" id="IPR013483">
    <property type="entry name" value="MoaA"/>
</dbReference>
<dbReference type="InterPro" id="IPR000385">
    <property type="entry name" value="MoaA_NifB_PqqE_Fe-S-bd_CS"/>
</dbReference>
<dbReference type="InterPro" id="IPR010505">
    <property type="entry name" value="MoaA_twitch"/>
</dbReference>
<dbReference type="InterPro" id="IPR050105">
    <property type="entry name" value="MoCo_biosynth_MoaA/MoaC"/>
</dbReference>
<dbReference type="InterPro" id="IPR007197">
    <property type="entry name" value="rSAM"/>
</dbReference>
<dbReference type="NCBIfam" id="TIGR02666">
    <property type="entry name" value="moaA"/>
    <property type="match status" value="1"/>
</dbReference>
<dbReference type="PANTHER" id="PTHR22960:SF0">
    <property type="entry name" value="MOLYBDENUM COFACTOR BIOSYNTHESIS PROTEIN 1"/>
    <property type="match status" value="1"/>
</dbReference>
<dbReference type="PANTHER" id="PTHR22960">
    <property type="entry name" value="MOLYBDOPTERIN COFACTOR SYNTHESIS PROTEIN A"/>
    <property type="match status" value="1"/>
</dbReference>
<dbReference type="Pfam" id="PF06463">
    <property type="entry name" value="Mob_synth_C"/>
    <property type="match status" value="1"/>
</dbReference>
<dbReference type="Pfam" id="PF04055">
    <property type="entry name" value="Radical_SAM"/>
    <property type="match status" value="1"/>
</dbReference>
<dbReference type="SFLD" id="SFLDF00276">
    <property type="entry name" value="cyclic_pyranopterin_phosphate"/>
    <property type="match status" value="1"/>
</dbReference>
<dbReference type="SFLD" id="SFLDG01216">
    <property type="entry name" value="thioether_bond_formation_requi"/>
    <property type="match status" value="1"/>
</dbReference>
<dbReference type="SMART" id="SM00729">
    <property type="entry name" value="Elp3"/>
    <property type="match status" value="1"/>
</dbReference>
<dbReference type="SUPFAM" id="SSF102114">
    <property type="entry name" value="Radical SAM enzymes"/>
    <property type="match status" value="1"/>
</dbReference>
<dbReference type="PROSITE" id="PS01305">
    <property type="entry name" value="MOAA_NIFB_PQQE"/>
    <property type="match status" value="1"/>
</dbReference>
<dbReference type="PROSITE" id="PS51918">
    <property type="entry name" value="RADICAL_SAM"/>
    <property type="match status" value="1"/>
</dbReference>
<sequence>MVEQIKDKLGRPIRDLRLSVTDRCNFRCDYCMPKEVFGDDFVFLPKNELLTFDEMARIAKVYAELGVKKIRITGGEPLMRRDLDVLIAKLNQIDGIEDIGLTTNGLLLKKHGQKLYDAGLRRINVSLDAIDDTLFQSINNRNIKATTILEQIDYATSIGLNVKVNVVIQKGINDDQIIPMLEYFKDKHIEIRFIEFMDVGNDNGWDFSKVVTKDEMLTMIEQHFEIDPVEPKYFGEVAKYYRHKDNGVQFGLITSVSQSFCSTCTRARLSSDGKFYGCLFATVDGFNVKAFIRSGVTDEELKEQFKALWQIRDDRYSDERTAQTVANRQRKKINMNYIGG</sequence>
<organism>
    <name type="scientific">Staphylococcus aureus (strain JH9)</name>
    <dbReference type="NCBI Taxonomy" id="359786"/>
    <lineage>
        <taxon>Bacteria</taxon>
        <taxon>Bacillati</taxon>
        <taxon>Bacillota</taxon>
        <taxon>Bacilli</taxon>
        <taxon>Bacillales</taxon>
        <taxon>Staphylococcaceae</taxon>
        <taxon>Staphylococcus</taxon>
    </lineage>
</organism>